<sequence length="199" mass="20967">MVRVVLATHNRNKALEFQQILGDAVPGLQIVGYDGPEPVEDGITFEQNALIKARAAAERTGMIALADDSGICVDAMGGAPGIFSARWAGRHGDAQANLRLLLDQLADLPDSSRAAHFTATLALVTPEGETTVVEGVWPGRIAREARGGHGHGYDPIFLPDGHDVTAAELGPEAKNAESHRARAFAAIVPVLRALSRPGN</sequence>
<evidence type="ECO:0000255" key="1">
    <source>
        <dbReference type="HAMAP-Rule" id="MF_01405"/>
    </source>
</evidence>
<gene>
    <name type="ordered locus">Lxx13570</name>
</gene>
<reference key="1">
    <citation type="journal article" date="2004" name="Mol. Plant Microbe Interact.">
        <title>The genome sequence of the Gram-positive sugarcane pathogen Leifsonia xyli subsp. xyli.</title>
        <authorList>
            <person name="Monteiro-Vitorello C.B."/>
            <person name="Camargo L.E.A."/>
            <person name="Van Sluys M.A."/>
            <person name="Kitajima J.P."/>
            <person name="Truffi D."/>
            <person name="do Amaral A.M."/>
            <person name="Harakava R."/>
            <person name="de Oliveira J.C.F."/>
            <person name="Wood D."/>
            <person name="de Oliveira M.C."/>
            <person name="Miyaki C.Y."/>
            <person name="Takita M.A."/>
            <person name="da Silva A.C.R."/>
            <person name="Furlan L.R."/>
            <person name="Carraro D.M."/>
            <person name="Camarotte G."/>
            <person name="Almeida N.F. Jr."/>
            <person name="Carrer H."/>
            <person name="Coutinho L.L."/>
            <person name="El-Dorry H.A."/>
            <person name="Ferro M.I.T."/>
            <person name="Gagliardi P.R."/>
            <person name="Giglioti E."/>
            <person name="Goldman M.H.S."/>
            <person name="Goldman G.H."/>
            <person name="Kimura E.T."/>
            <person name="Ferro E.S."/>
            <person name="Kuramae E.E."/>
            <person name="Lemos E.G.M."/>
            <person name="Lemos M.V.F."/>
            <person name="Mauro S.M.Z."/>
            <person name="Machado M.A."/>
            <person name="Marino C.L."/>
            <person name="Menck C.F."/>
            <person name="Nunes L.R."/>
            <person name="Oliveira R.C."/>
            <person name="Pereira G.G."/>
            <person name="Siqueira W."/>
            <person name="de Souza A.A."/>
            <person name="Tsai S.M."/>
            <person name="Zanca A.S."/>
            <person name="Simpson A.J.G."/>
            <person name="Brumbley S.M."/>
            <person name="Setubal J.C."/>
        </authorList>
    </citation>
    <scope>NUCLEOTIDE SEQUENCE [LARGE SCALE GENOMIC DNA]</scope>
    <source>
        <strain>CTCB07</strain>
    </source>
</reference>
<proteinExistence type="inferred from homology"/>
<protein>
    <recommendedName>
        <fullName evidence="1">dITP/XTP pyrophosphatase</fullName>
        <ecNumber evidence="1">3.6.1.66</ecNumber>
    </recommendedName>
    <alternativeName>
        <fullName evidence="1">Non-canonical purine NTP pyrophosphatase</fullName>
    </alternativeName>
    <alternativeName>
        <fullName evidence="1">Non-standard purine NTP pyrophosphatase</fullName>
    </alternativeName>
    <alternativeName>
        <fullName evidence="1">Nucleoside-triphosphate diphosphatase</fullName>
    </alternativeName>
    <alternativeName>
        <fullName evidence="1">Nucleoside-triphosphate pyrophosphatase</fullName>
        <shortName evidence="1">NTPase</shortName>
    </alternativeName>
</protein>
<keyword id="KW-0378">Hydrolase</keyword>
<keyword id="KW-0460">Magnesium</keyword>
<keyword id="KW-0479">Metal-binding</keyword>
<keyword id="KW-0546">Nucleotide metabolism</keyword>
<keyword id="KW-0547">Nucleotide-binding</keyword>
<keyword id="KW-1185">Reference proteome</keyword>
<organism>
    <name type="scientific">Leifsonia xyli subsp. xyli (strain CTCB07)</name>
    <dbReference type="NCBI Taxonomy" id="281090"/>
    <lineage>
        <taxon>Bacteria</taxon>
        <taxon>Bacillati</taxon>
        <taxon>Actinomycetota</taxon>
        <taxon>Actinomycetes</taxon>
        <taxon>Micrococcales</taxon>
        <taxon>Microbacteriaceae</taxon>
        <taxon>Leifsonia</taxon>
    </lineage>
</organism>
<name>IXTPA_LEIXX</name>
<accession>Q6AEL0</accession>
<comment type="function">
    <text evidence="1">Pyrophosphatase that catalyzes the hydrolysis of nucleoside triphosphates to their monophosphate derivatives, with a high preference for the non-canonical purine nucleotides XTP (xanthosine triphosphate), dITP (deoxyinosine triphosphate) and ITP. Seems to function as a house-cleaning enzyme that removes non-canonical purine nucleotides from the nucleotide pool, thus preventing their incorporation into DNA/RNA and avoiding chromosomal lesions.</text>
</comment>
<comment type="catalytic activity">
    <reaction evidence="1">
        <text>XTP + H2O = XMP + diphosphate + H(+)</text>
        <dbReference type="Rhea" id="RHEA:28610"/>
        <dbReference type="ChEBI" id="CHEBI:15377"/>
        <dbReference type="ChEBI" id="CHEBI:15378"/>
        <dbReference type="ChEBI" id="CHEBI:33019"/>
        <dbReference type="ChEBI" id="CHEBI:57464"/>
        <dbReference type="ChEBI" id="CHEBI:61314"/>
        <dbReference type="EC" id="3.6.1.66"/>
    </reaction>
</comment>
<comment type="catalytic activity">
    <reaction evidence="1">
        <text>dITP + H2O = dIMP + diphosphate + H(+)</text>
        <dbReference type="Rhea" id="RHEA:28342"/>
        <dbReference type="ChEBI" id="CHEBI:15377"/>
        <dbReference type="ChEBI" id="CHEBI:15378"/>
        <dbReference type="ChEBI" id="CHEBI:33019"/>
        <dbReference type="ChEBI" id="CHEBI:61194"/>
        <dbReference type="ChEBI" id="CHEBI:61382"/>
        <dbReference type="EC" id="3.6.1.66"/>
    </reaction>
</comment>
<comment type="catalytic activity">
    <reaction evidence="1">
        <text>ITP + H2O = IMP + diphosphate + H(+)</text>
        <dbReference type="Rhea" id="RHEA:29399"/>
        <dbReference type="ChEBI" id="CHEBI:15377"/>
        <dbReference type="ChEBI" id="CHEBI:15378"/>
        <dbReference type="ChEBI" id="CHEBI:33019"/>
        <dbReference type="ChEBI" id="CHEBI:58053"/>
        <dbReference type="ChEBI" id="CHEBI:61402"/>
        <dbReference type="EC" id="3.6.1.66"/>
    </reaction>
</comment>
<comment type="cofactor">
    <cofactor evidence="1">
        <name>Mg(2+)</name>
        <dbReference type="ChEBI" id="CHEBI:18420"/>
    </cofactor>
    <text evidence="1">Binds 1 Mg(2+) ion per subunit.</text>
</comment>
<comment type="subunit">
    <text evidence="1">Homodimer.</text>
</comment>
<comment type="similarity">
    <text evidence="1">Belongs to the HAM1 NTPase family.</text>
</comment>
<dbReference type="EC" id="3.6.1.66" evidence="1"/>
<dbReference type="EMBL" id="AE016822">
    <property type="protein sequence ID" value="AAT89186.1"/>
    <property type="molecule type" value="Genomic_DNA"/>
</dbReference>
<dbReference type="RefSeq" id="WP_011186180.1">
    <property type="nucleotide sequence ID" value="NC_006087.1"/>
</dbReference>
<dbReference type="SMR" id="Q6AEL0"/>
<dbReference type="STRING" id="281090.Lxx13570"/>
<dbReference type="KEGG" id="lxx:Lxx13570"/>
<dbReference type="eggNOG" id="COG0127">
    <property type="taxonomic scope" value="Bacteria"/>
</dbReference>
<dbReference type="HOGENOM" id="CLU_082080_0_1_11"/>
<dbReference type="Proteomes" id="UP000001306">
    <property type="component" value="Chromosome"/>
</dbReference>
<dbReference type="GO" id="GO:0005829">
    <property type="term" value="C:cytosol"/>
    <property type="evidence" value="ECO:0007669"/>
    <property type="project" value="TreeGrafter"/>
</dbReference>
<dbReference type="GO" id="GO:0035870">
    <property type="term" value="F:dITP diphosphatase activity"/>
    <property type="evidence" value="ECO:0007669"/>
    <property type="project" value="RHEA"/>
</dbReference>
<dbReference type="GO" id="GO:0036220">
    <property type="term" value="F:ITP diphosphatase activity"/>
    <property type="evidence" value="ECO:0007669"/>
    <property type="project" value="UniProtKB-EC"/>
</dbReference>
<dbReference type="GO" id="GO:0046872">
    <property type="term" value="F:metal ion binding"/>
    <property type="evidence" value="ECO:0007669"/>
    <property type="project" value="UniProtKB-KW"/>
</dbReference>
<dbReference type="GO" id="GO:0000166">
    <property type="term" value="F:nucleotide binding"/>
    <property type="evidence" value="ECO:0007669"/>
    <property type="project" value="UniProtKB-KW"/>
</dbReference>
<dbReference type="GO" id="GO:0017111">
    <property type="term" value="F:ribonucleoside triphosphate phosphatase activity"/>
    <property type="evidence" value="ECO:0007669"/>
    <property type="project" value="InterPro"/>
</dbReference>
<dbReference type="GO" id="GO:0036222">
    <property type="term" value="F:XTP diphosphatase activity"/>
    <property type="evidence" value="ECO:0007669"/>
    <property type="project" value="RHEA"/>
</dbReference>
<dbReference type="GO" id="GO:0009117">
    <property type="term" value="P:nucleotide metabolic process"/>
    <property type="evidence" value="ECO:0007669"/>
    <property type="project" value="UniProtKB-KW"/>
</dbReference>
<dbReference type="GO" id="GO:0009146">
    <property type="term" value="P:purine nucleoside triphosphate catabolic process"/>
    <property type="evidence" value="ECO:0007669"/>
    <property type="project" value="UniProtKB-UniRule"/>
</dbReference>
<dbReference type="CDD" id="cd00515">
    <property type="entry name" value="HAM1"/>
    <property type="match status" value="1"/>
</dbReference>
<dbReference type="FunFam" id="3.90.950.10:FF:000001">
    <property type="entry name" value="dITP/XTP pyrophosphatase"/>
    <property type="match status" value="1"/>
</dbReference>
<dbReference type="Gene3D" id="3.90.950.10">
    <property type="match status" value="1"/>
</dbReference>
<dbReference type="HAMAP" id="MF_01405">
    <property type="entry name" value="Non_canon_purine_NTPase"/>
    <property type="match status" value="1"/>
</dbReference>
<dbReference type="InterPro" id="IPR020922">
    <property type="entry name" value="dITP/XTP_pyrophosphatase"/>
</dbReference>
<dbReference type="InterPro" id="IPR029001">
    <property type="entry name" value="ITPase-like_fam"/>
</dbReference>
<dbReference type="InterPro" id="IPR002637">
    <property type="entry name" value="RdgB/HAM1"/>
</dbReference>
<dbReference type="NCBIfam" id="TIGR00042">
    <property type="entry name" value="RdgB/HAM1 family non-canonical purine NTP pyrophosphatase"/>
    <property type="match status" value="1"/>
</dbReference>
<dbReference type="PANTHER" id="PTHR11067:SF9">
    <property type="entry name" value="INOSINE TRIPHOSPHATE PYROPHOSPHATASE"/>
    <property type="match status" value="1"/>
</dbReference>
<dbReference type="PANTHER" id="PTHR11067">
    <property type="entry name" value="INOSINE TRIPHOSPHATE PYROPHOSPHATASE/HAM1 PROTEIN"/>
    <property type="match status" value="1"/>
</dbReference>
<dbReference type="Pfam" id="PF01725">
    <property type="entry name" value="Ham1p_like"/>
    <property type="match status" value="1"/>
</dbReference>
<dbReference type="SUPFAM" id="SSF52972">
    <property type="entry name" value="ITPase-like"/>
    <property type="match status" value="1"/>
</dbReference>
<feature type="chain" id="PRO_0000178184" description="dITP/XTP pyrophosphatase">
    <location>
        <begin position="1"/>
        <end position="199"/>
    </location>
</feature>
<feature type="active site" description="Proton acceptor" evidence="1">
    <location>
        <position position="68"/>
    </location>
</feature>
<feature type="binding site" evidence="1">
    <location>
        <begin position="8"/>
        <end position="13"/>
    </location>
    <ligand>
        <name>substrate</name>
    </ligand>
</feature>
<feature type="binding site" evidence="1">
    <location>
        <position position="68"/>
    </location>
    <ligand>
        <name>Mg(2+)</name>
        <dbReference type="ChEBI" id="CHEBI:18420"/>
    </ligand>
</feature>
<feature type="binding site" evidence="1">
    <location>
        <position position="69"/>
    </location>
    <ligand>
        <name>substrate</name>
    </ligand>
</feature>
<feature type="binding site" evidence="1">
    <location>
        <begin position="151"/>
        <end position="154"/>
    </location>
    <ligand>
        <name>substrate</name>
    </ligand>
</feature>
<feature type="binding site" evidence="1">
    <location>
        <position position="174"/>
    </location>
    <ligand>
        <name>substrate</name>
    </ligand>
</feature>
<feature type="binding site" evidence="1">
    <location>
        <begin position="179"/>
        <end position="180"/>
    </location>
    <ligand>
        <name>substrate</name>
    </ligand>
</feature>